<proteinExistence type="evidence at protein level"/>
<dbReference type="EMBL" id="Z73132">
    <property type="protein sequence ID" value="CAA97476.1"/>
    <property type="molecule type" value="Genomic_DNA"/>
</dbReference>
<dbReference type="EMBL" id="BK006945">
    <property type="protein sequence ID" value="DAA09293.1"/>
    <property type="molecule type" value="Genomic_DNA"/>
</dbReference>
<dbReference type="PIR" id="S64778">
    <property type="entry name" value="S64778"/>
</dbReference>
<dbReference type="RefSeq" id="NP_013073.1">
    <property type="nucleotide sequence ID" value="NM_001181847.1"/>
</dbReference>
<dbReference type="SMR" id="Q07821"/>
<dbReference type="BioGRID" id="31225">
    <property type="interactions" value="83"/>
</dbReference>
<dbReference type="ComplexPortal" id="CPX-2723">
    <property type="entry name" value="ISA1-ISA2-IBA57 mitochondrial iron-sulfur protein assembly complex"/>
</dbReference>
<dbReference type="DIP" id="DIP-1394N"/>
<dbReference type="FunCoup" id="Q07821">
    <property type="interactions" value="256"/>
</dbReference>
<dbReference type="IntAct" id="Q07821">
    <property type="interactions" value="8"/>
</dbReference>
<dbReference type="MINT" id="Q07821"/>
<dbReference type="STRING" id="4932.YLL027W"/>
<dbReference type="PaxDb" id="4932-YLL027W"/>
<dbReference type="PeptideAtlas" id="Q07821"/>
<dbReference type="EnsemblFungi" id="YLL027W_mRNA">
    <property type="protein sequence ID" value="YLL027W"/>
    <property type="gene ID" value="YLL027W"/>
</dbReference>
<dbReference type="GeneID" id="850632"/>
<dbReference type="KEGG" id="sce:YLL027W"/>
<dbReference type="AGR" id="SGD:S000003950"/>
<dbReference type="SGD" id="S000003950">
    <property type="gene designation" value="ISA1"/>
</dbReference>
<dbReference type="VEuPathDB" id="FungiDB:YLL027W"/>
<dbReference type="eggNOG" id="KOG1120">
    <property type="taxonomic scope" value="Eukaryota"/>
</dbReference>
<dbReference type="GeneTree" id="ENSGT00490000043385"/>
<dbReference type="HOGENOM" id="CLU_069054_0_1_1"/>
<dbReference type="InParanoid" id="Q07821"/>
<dbReference type="OMA" id="QYITEPG"/>
<dbReference type="OrthoDB" id="333486at2759"/>
<dbReference type="BioCyc" id="YEAST:G3O-32131-MONOMER"/>
<dbReference type="Reactome" id="R-SCE-1362409">
    <property type="pathway name" value="Mitochondrial iron-sulfur cluster biogenesis"/>
</dbReference>
<dbReference type="BioGRID-ORCS" id="850632">
    <property type="hits" value="9 hits in 10 CRISPR screens"/>
</dbReference>
<dbReference type="PRO" id="PR:Q07821"/>
<dbReference type="Proteomes" id="UP000002311">
    <property type="component" value="Chromosome XII"/>
</dbReference>
<dbReference type="RNAct" id="Q07821">
    <property type="molecule type" value="protein"/>
</dbReference>
<dbReference type="GO" id="GO:0005737">
    <property type="term" value="C:cytoplasm"/>
    <property type="evidence" value="ECO:0000318"/>
    <property type="project" value="GO_Central"/>
</dbReference>
<dbReference type="GO" id="GO:0005759">
    <property type="term" value="C:mitochondrial matrix"/>
    <property type="evidence" value="ECO:0000314"/>
    <property type="project" value="SGD"/>
</dbReference>
<dbReference type="GO" id="GO:0005739">
    <property type="term" value="C:mitochondrion"/>
    <property type="evidence" value="ECO:0000318"/>
    <property type="project" value="GO_Central"/>
</dbReference>
<dbReference type="GO" id="GO:0051537">
    <property type="term" value="F:2 iron, 2 sulfur cluster binding"/>
    <property type="evidence" value="ECO:0000318"/>
    <property type="project" value="GO_Central"/>
</dbReference>
<dbReference type="GO" id="GO:0005506">
    <property type="term" value="F:iron ion binding"/>
    <property type="evidence" value="ECO:0000314"/>
    <property type="project" value="SGD"/>
</dbReference>
<dbReference type="GO" id="GO:0051536">
    <property type="term" value="F:iron-sulfur cluster binding"/>
    <property type="evidence" value="ECO:0000247"/>
    <property type="project" value="SGD"/>
</dbReference>
<dbReference type="GO" id="GO:0044572">
    <property type="term" value="P:[4Fe-4S] cluster assembly"/>
    <property type="evidence" value="ECO:0000315"/>
    <property type="project" value="SGD"/>
</dbReference>
<dbReference type="GO" id="GO:0009102">
    <property type="term" value="P:biotin biosynthetic process"/>
    <property type="evidence" value="ECO:0000315"/>
    <property type="project" value="SGD"/>
</dbReference>
<dbReference type="GO" id="GO:0016226">
    <property type="term" value="P:iron-sulfur cluster assembly"/>
    <property type="evidence" value="ECO:0000315"/>
    <property type="project" value="SGD"/>
</dbReference>
<dbReference type="GO" id="GO:0051604">
    <property type="term" value="P:protein maturation"/>
    <property type="evidence" value="ECO:0000315"/>
    <property type="project" value="SGD"/>
</dbReference>
<dbReference type="FunFam" id="2.60.300.12:FF:000001">
    <property type="entry name" value="Iron-binding protein IscA"/>
    <property type="match status" value="1"/>
</dbReference>
<dbReference type="Gene3D" id="2.60.300.12">
    <property type="entry name" value="HesB-like domain"/>
    <property type="match status" value="1"/>
</dbReference>
<dbReference type="InterPro" id="IPR050322">
    <property type="entry name" value="Fe-S_cluster_asmbl/transfer"/>
</dbReference>
<dbReference type="InterPro" id="IPR000361">
    <property type="entry name" value="FeS_biogenesis"/>
</dbReference>
<dbReference type="InterPro" id="IPR016092">
    <property type="entry name" value="FeS_cluster_insertion"/>
</dbReference>
<dbReference type="InterPro" id="IPR017870">
    <property type="entry name" value="FeS_cluster_insertion_CS"/>
</dbReference>
<dbReference type="InterPro" id="IPR035903">
    <property type="entry name" value="HesB-like_dom_sf"/>
</dbReference>
<dbReference type="NCBIfam" id="TIGR00049">
    <property type="entry name" value="iron-sulfur cluster assembly accessory protein"/>
    <property type="match status" value="1"/>
</dbReference>
<dbReference type="PANTHER" id="PTHR10072:SF41">
    <property type="entry name" value="IRON-SULFUR CLUSTER ASSEMBLY 1 HOMOLOG, MITOCHONDRIAL"/>
    <property type="match status" value="1"/>
</dbReference>
<dbReference type="PANTHER" id="PTHR10072">
    <property type="entry name" value="IRON-SULFUR CLUSTER ASSEMBLY PROTEIN"/>
    <property type="match status" value="1"/>
</dbReference>
<dbReference type="Pfam" id="PF01521">
    <property type="entry name" value="Fe-S_biosyn"/>
    <property type="match status" value="1"/>
</dbReference>
<dbReference type="SUPFAM" id="SSF89360">
    <property type="entry name" value="HesB-like domain"/>
    <property type="match status" value="1"/>
</dbReference>
<dbReference type="PROSITE" id="PS01152">
    <property type="entry name" value="HESB"/>
    <property type="match status" value="1"/>
</dbReference>
<accession>Q07821</accession>
<accession>D6VXX7</accession>
<reference key="1">
    <citation type="journal article" date="1997" name="Nature">
        <title>The nucleotide sequence of Saccharomyces cerevisiae chromosome XII.</title>
        <authorList>
            <person name="Johnston M."/>
            <person name="Hillier L.W."/>
            <person name="Riles L."/>
            <person name="Albermann K."/>
            <person name="Andre B."/>
            <person name="Ansorge W."/>
            <person name="Benes V."/>
            <person name="Brueckner M."/>
            <person name="Delius H."/>
            <person name="Dubois E."/>
            <person name="Duesterhoeft A."/>
            <person name="Entian K.-D."/>
            <person name="Floeth M."/>
            <person name="Goffeau A."/>
            <person name="Hebling U."/>
            <person name="Heumann K."/>
            <person name="Heuss-Neitzel D."/>
            <person name="Hilbert H."/>
            <person name="Hilger F."/>
            <person name="Kleine K."/>
            <person name="Koetter P."/>
            <person name="Louis E.J."/>
            <person name="Messenguy F."/>
            <person name="Mewes H.-W."/>
            <person name="Miosga T."/>
            <person name="Moestl D."/>
            <person name="Mueller-Auer S."/>
            <person name="Nentwich U."/>
            <person name="Obermaier B."/>
            <person name="Piravandi E."/>
            <person name="Pohl T.M."/>
            <person name="Portetelle D."/>
            <person name="Purnelle B."/>
            <person name="Rechmann S."/>
            <person name="Rieger M."/>
            <person name="Rinke M."/>
            <person name="Rose M."/>
            <person name="Scharfe M."/>
            <person name="Scherens B."/>
            <person name="Scholler P."/>
            <person name="Schwager C."/>
            <person name="Schwarz S."/>
            <person name="Underwood A.P."/>
            <person name="Urrestarazu L.A."/>
            <person name="Vandenbol M."/>
            <person name="Verhasselt P."/>
            <person name="Vierendeels F."/>
            <person name="Voet M."/>
            <person name="Volckaert G."/>
            <person name="Voss H."/>
            <person name="Wambutt R."/>
            <person name="Wedler E."/>
            <person name="Wedler H."/>
            <person name="Zimmermann F.K."/>
            <person name="Zollner A."/>
            <person name="Hani J."/>
            <person name="Hoheisel J.D."/>
        </authorList>
    </citation>
    <scope>NUCLEOTIDE SEQUENCE [LARGE SCALE GENOMIC DNA]</scope>
    <source>
        <strain>ATCC 204508 / S288c</strain>
    </source>
</reference>
<reference key="2">
    <citation type="journal article" date="2014" name="G3 (Bethesda)">
        <title>The reference genome sequence of Saccharomyces cerevisiae: Then and now.</title>
        <authorList>
            <person name="Engel S.R."/>
            <person name="Dietrich F.S."/>
            <person name="Fisk D.G."/>
            <person name="Binkley G."/>
            <person name="Balakrishnan R."/>
            <person name="Costanzo M.C."/>
            <person name="Dwight S.S."/>
            <person name="Hitz B.C."/>
            <person name="Karra K."/>
            <person name="Nash R.S."/>
            <person name="Weng S."/>
            <person name="Wong E.D."/>
            <person name="Lloyd P."/>
            <person name="Skrzypek M.S."/>
            <person name="Miyasato S.R."/>
            <person name="Simison M."/>
            <person name="Cherry J.M."/>
        </authorList>
    </citation>
    <scope>GENOME REANNOTATION</scope>
    <source>
        <strain>ATCC 204508 / S288c</strain>
    </source>
</reference>
<reference key="3">
    <citation type="journal article" date="2000" name="J. Biol. Chem.">
        <title>Isa1p is a component of the mitochondrial machinery for maturation of cellular iron-sulfur proteins and requires conserved cysteine residues for function.</title>
        <authorList>
            <person name="Kaut A."/>
            <person name="Lange H."/>
            <person name="Diekert K."/>
            <person name="Kispal G."/>
            <person name="Lill R."/>
        </authorList>
    </citation>
    <scope>FUNCTION</scope>
</reference>
<reference key="4">
    <citation type="journal article" date="2003" name="Nature">
        <title>Global analysis of protein expression in yeast.</title>
        <authorList>
            <person name="Ghaemmaghami S."/>
            <person name="Huh W.-K."/>
            <person name="Bower K."/>
            <person name="Howson R.W."/>
            <person name="Belle A."/>
            <person name="Dephoure N."/>
            <person name="O'Shea E.K."/>
            <person name="Weissman J.S."/>
        </authorList>
    </citation>
    <scope>LEVEL OF PROTEIN EXPRESSION [LARGE SCALE ANALYSIS]</scope>
</reference>
<name>ISA1_YEAST</name>
<keyword id="KW-0408">Iron</keyword>
<keyword id="KW-0479">Metal-binding</keyword>
<keyword id="KW-0496">Mitochondrion</keyword>
<keyword id="KW-1185">Reference proteome</keyword>
<comment type="function">
    <text evidence="3">Involved in the assembly of mitochondrial and cytoplasmic iron-sulfur proteins. Probably involved in the binding of an intermediate of Fe/S cluster assembly.</text>
</comment>
<comment type="interaction">
    <interactant intactId="EBI-27136">
        <id>Q07821</id>
    </interactant>
    <interactant intactId="EBI-25654">
        <id>P47158</id>
        <label>IBA57</label>
    </interactant>
    <organismsDiffer>false</organismsDiffer>
    <experiments>2</experiments>
</comment>
<comment type="interaction">
    <interactant intactId="EBI-27136">
        <id>Q07821</id>
    </interactant>
    <interactant intactId="EBI-29438">
        <id>Q12425</id>
        <label>ISA2</label>
    </interactant>
    <organismsDiffer>false</organismsDiffer>
    <experiments>2</experiments>
</comment>
<comment type="subcellular location">
    <subcellularLocation>
        <location>Mitochondrion matrix</location>
    </subcellularLocation>
</comment>
<comment type="miscellaneous">
    <text evidence="4">Present with 125 molecules/cell in log phase SD medium.</text>
</comment>
<comment type="similarity">
    <text evidence="5">Belongs to the HesB/IscA family.</text>
</comment>
<feature type="chain" id="PRO_0000077034" description="Iron-sulfur assembly protein 1">
    <location>
        <begin position="1"/>
        <end position="250"/>
    </location>
</feature>
<feature type="region of interest" description="Disordered" evidence="2">
    <location>
        <begin position="54"/>
        <end position="89"/>
    </location>
</feature>
<feature type="compositionally biased region" description="Low complexity" evidence="2">
    <location>
        <begin position="75"/>
        <end position="89"/>
    </location>
</feature>
<feature type="binding site" evidence="1">
    <location>
        <position position="178"/>
    </location>
    <ligand>
        <name>Fe cation</name>
        <dbReference type="ChEBI" id="CHEBI:24875"/>
    </ligand>
</feature>
<feature type="binding site" evidence="1">
    <location>
        <position position="242"/>
    </location>
    <ligand>
        <name>Fe cation</name>
        <dbReference type="ChEBI" id="CHEBI:24875"/>
    </ligand>
</feature>
<feature type="binding site" evidence="1">
    <location>
        <position position="244"/>
    </location>
    <ligand>
        <name>Fe cation</name>
        <dbReference type="ChEBI" id="CHEBI:24875"/>
    </ligand>
</feature>
<gene>
    <name type="primary">ISA1</name>
    <name type="ordered locus">YLL027W</name>
</gene>
<protein>
    <recommendedName>
        <fullName>Iron-sulfur assembly protein 1</fullName>
    </recommendedName>
</protein>
<organism>
    <name type="scientific">Saccharomyces cerevisiae (strain ATCC 204508 / S288c)</name>
    <name type="common">Baker's yeast</name>
    <dbReference type="NCBI Taxonomy" id="559292"/>
    <lineage>
        <taxon>Eukaryota</taxon>
        <taxon>Fungi</taxon>
        <taxon>Dikarya</taxon>
        <taxon>Ascomycota</taxon>
        <taxon>Saccharomycotina</taxon>
        <taxon>Saccharomycetes</taxon>
        <taxon>Saccharomycetales</taxon>
        <taxon>Saccharomycetaceae</taxon>
        <taxon>Saccharomyces</taxon>
    </lineage>
</organism>
<evidence type="ECO:0000250" key="1">
    <source>
        <dbReference type="UniProtKB" id="P0AAC8"/>
    </source>
</evidence>
<evidence type="ECO:0000256" key="2">
    <source>
        <dbReference type="SAM" id="MobiDB-lite"/>
    </source>
</evidence>
<evidence type="ECO:0000269" key="3">
    <source>
    </source>
</evidence>
<evidence type="ECO:0000269" key="4">
    <source>
    </source>
</evidence>
<evidence type="ECO:0000305" key="5"/>
<sequence length="250" mass="27675">MINTGRSRNSVLLAHRFLSTGGFWRGGTNGTMSRTINNVNPFKLKFIPKTVPAAADSVSPDSQRPGKKPFKFIVSNQSKSSKASKSPKWSSYAFPSRETIKSHEEAIKKQNKAIDEQIAAAVSKNDCSCTEPPKKRKRKLRPRKALITLSPKAIKHLRALLAQPEPKLIRVSARNRGCSGLTYDLQYITEPGKFDEVVEQDGVKIVIDSKALFSIIGSEMDWIDDKLASKFVFKNPNSKGTCGCGESFMV</sequence>